<protein>
    <recommendedName>
        <fullName evidence="7">ATP-dependent RNA helicase DHX30</fullName>
        <ecNumber evidence="2">3.6.4.13</ecNumber>
    </recommendedName>
    <alternativeName>
        <fullName>DEAH box protein 30</fullName>
    </alternativeName>
</protein>
<evidence type="ECO:0000250" key="1">
    <source>
        <dbReference type="UniProtKB" id="Q5BJS0"/>
    </source>
</evidence>
<evidence type="ECO:0000250" key="2">
    <source>
        <dbReference type="UniProtKB" id="Q7L2E3"/>
    </source>
</evidence>
<evidence type="ECO:0000250" key="3">
    <source>
        <dbReference type="UniProtKB" id="Q99PU8"/>
    </source>
</evidence>
<evidence type="ECO:0000255" key="4">
    <source>
        <dbReference type="PROSITE-ProRule" id="PRU00541"/>
    </source>
</evidence>
<evidence type="ECO:0000255" key="5">
    <source>
        <dbReference type="PROSITE-ProRule" id="PRU00542"/>
    </source>
</evidence>
<evidence type="ECO:0000256" key="6">
    <source>
        <dbReference type="SAM" id="MobiDB-lite"/>
    </source>
</evidence>
<evidence type="ECO:0000305" key="7"/>
<sequence length="1231" mass="137703">MAALGLLLQAAAACGSAGPLRLGRCYRGARGLCTRLAEPDGLEGARQEDEEEQPPPPGAEEQSTAMVKDSRDLLKEFPQPKNLLNSVIGRALGISHARDKLVYIHTNGPRKKKVTLHIKWPKNVEVEGYGTKKIDAERQAAAAACQLFKGWGLLGPRNELFDAAKYRLLADQLGCPDERWCSEGKWRSKSGPSLADLSTCWRRMEPDDPIQPMEQGRMPKAMRREELEEGELEEGELEEGELEEEAIDVSDYLPMAHQDARTPGRDASRGGSSIEMTDDNTAIRALTQFPLPKNLLAQVIQIATSSSTVKEYMQFRTVGTKTKICKLTLRWPCPMTFAAKGRRKVEAENKAAALACQKLKSLGLVDKNNNPLSHAMYNMTSLRELGENQRKPCHIKVPEATLRKIENYLNHYPVDIRESRPRIADDMMNLSKESGAISDAITGKTYIPMLEAEEVRLSQNLLALWKRRGSSWQESHPLPVDPHKDTILSAIEQNPVVVIAGDTGCGKTTRIPQLLLEHYILEGRGARCNVVITQPRRISAISVAQRVAQELGPNMRKNVGYQVRLESKPPARGGALLFCTVGILLRKLQGNPSLEGVSHVVVDEVHERDVNTDFLLILLKGIQKLNPDLRLVLMSATGDNQRFSHYFGGCPVVKVPGFMYPVKEYYLEEILAKLGRHRHRHYEIKQSDDECVLDLDLITDLVLQIDAHGEPGGILCFLPGWQEIKGVQQRLLEMLGSQNSRYLVLPVHSNIPMMDQQNIFQRPPPGVRKIVLATNIAETSITINDIVHVVDSGTHKEERYDLKTKVSCLETVWVSKSNVVQRRGRAGRCQSGFAYHLFPRSRLDKMPTYQVPEILRTPLENLVVQAKIHMPEKTAVEFLSKALDSPDIKAVDEAVILLQEIGVLDQREALTTLGKRLAQISTDPRLAKAIVLASIYRCLHPLLVIVSCLTRDPFSSSLQNRAEVDKAKAVLSRESGSDHLAFVRAVAGWEEVLRRRDSRARDNYLQDYYLYGPSLRFINGLVKQFSENLYEAFLVSSPSDCTMPSSVCNQYSEEEELVKGVLMAGLYPNLIQVRQGKVTRQGKFKPNSYAYRTKAGTVLLHKSTINREASKLYSRWLTYFMAVKSNGGVFVRDSSQVHPLAVLLMTDTDIHVRDDGWRATVSLTDSDLLVLEGDSYTIRLLRDFRVSLSKMVETCLCYEMAAIPGDLHHQHSQLLDILVDLLKGPPGSFGA</sequence>
<gene>
    <name type="primary">DHX30</name>
    <name type="ORF">RCJMB04_29l1</name>
</gene>
<proteinExistence type="evidence at transcript level"/>
<accession>Q5ZI74</accession>
<keyword id="KW-0067">ATP-binding</keyword>
<keyword id="KW-0963">Cytoplasm</keyword>
<keyword id="KW-0347">Helicase</keyword>
<keyword id="KW-0378">Hydrolase</keyword>
<keyword id="KW-0496">Mitochondrion</keyword>
<keyword id="KW-1135">Mitochondrion nucleoid</keyword>
<keyword id="KW-0547">Nucleotide-binding</keyword>
<keyword id="KW-1185">Reference proteome</keyword>
<keyword id="KW-0677">Repeat</keyword>
<keyword id="KW-0690">Ribosome biogenesis</keyword>
<keyword id="KW-0694">RNA-binding</keyword>
<name>DHX30_CHICK</name>
<comment type="function">
    <text evidence="1 2 3">RNA-dependent helicase. Plays an important role in the assembly of the mitochondrial large ribosomal subunit. Required for optimal function of the zinc-finger antiviral protein ZC3HAV1. Associates with mitochondrial DNA. Involved in nervous system development and differentiation through its involvement in the up-regulation of a number of genes which are required for neurogenesis, including GSC, NCAM1, neurogenin, and NEUROD.</text>
</comment>
<comment type="catalytic activity">
    <reaction evidence="2">
        <text>ATP + H2O = ADP + phosphate + H(+)</text>
        <dbReference type="Rhea" id="RHEA:13065"/>
        <dbReference type="ChEBI" id="CHEBI:15377"/>
        <dbReference type="ChEBI" id="CHEBI:15378"/>
        <dbReference type="ChEBI" id="CHEBI:30616"/>
        <dbReference type="ChEBI" id="CHEBI:43474"/>
        <dbReference type="ChEBI" id="CHEBI:456216"/>
        <dbReference type="EC" id="3.6.4.13"/>
    </reaction>
</comment>
<comment type="subcellular location">
    <subcellularLocation>
        <location evidence="2">Cytoplasm</location>
    </subcellularLocation>
    <subcellularLocation>
        <location evidence="2">Mitochondrion</location>
    </subcellularLocation>
    <subcellularLocation>
        <location evidence="2">Mitochondrion matrix</location>
        <location evidence="2">Mitochondrion nucleoid</location>
    </subcellularLocation>
    <text evidence="2">Localizes to mitochondrial RNA granules found in close proximity to the mitochondrial nucleoids. Relocalizes to stress granules upon heat stress.</text>
</comment>
<comment type="similarity">
    <text evidence="7">Belongs to the DEAD box helicase family. DEAH subfamily.</text>
</comment>
<organism>
    <name type="scientific">Gallus gallus</name>
    <name type="common">Chicken</name>
    <dbReference type="NCBI Taxonomy" id="9031"/>
    <lineage>
        <taxon>Eukaryota</taxon>
        <taxon>Metazoa</taxon>
        <taxon>Chordata</taxon>
        <taxon>Craniata</taxon>
        <taxon>Vertebrata</taxon>
        <taxon>Euteleostomi</taxon>
        <taxon>Archelosauria</taxon>
        <taxon>Archosauria</taxon>
        <taxon>Dinosauria</taxon>
        <taxon>Saurischia</taxon>
        <taxon>Theropoda</taxon>
        <taxon>Coelurosauria</taxon>
        <taxon>Aves</taxon>
        <taxon>Neognathae</taxon>
        <taxon>Galloanserae</taxon>
        <taxon>Galliformes</taxon>
        <taxon>Phasianidae</taxon>
        <taxon>Phasianinae</taxon>
        <taxon>Gallus</taxon>
    </lineage>
</organism>
<feature type="chain" id="PRO_0000245542" description="ATP-dependent RNA helicase DHX30">
    <location>
        <begin position="1"/>
        <end position="1231"/>
    </location>
</feature>
<feature type="domain" description="DRBM 1">
    <location>
        <begin position="80"/>
        <end position="148"/>
    </location>
</feature>
<feature type="domain" description="DRBM 2">
    <location>
        <begin position="292"/>
        <end position="359"/>
    </location>
</feature>
<feature type="domain" description="Helicase ATP-binding" evidence="4">
    <location>
        <begin position="488"/>
        <end position="656"/>
    </location>
</feature>
<feature type="domain" description="Helicase C-terminal" evidence="5">
    <location>
        <begin position="697"/>
        <end position="870"/>
    </location>
</feature>
<feature type="region of interest" description="Disordered" evidence="6">
    <location>
        <begin position="39"/>
        <end position="65"/>
    </location>
</feature>
<feature type="short sequence motif" description="DEAH box">
    <location>
        <begin position="603"/>
        <end position="606"/>
    </location>
</feature>
<feature type="binding site" evidence="4">
    <location>
        <begin position="501"/>
        <end position="508"/>
    </location>
    <ligand>
        <name>ATP</name>
        <dbReference type="ChEBI" id="CHEBI:30616"/>
    </ligand>
</feature>
<reference key="1">
    <citation type="journal article" date="2005" name="Genome Biol.">
        <title>Full-length cDNAs from chicken bursal lymphocytes to facilitate gene function analysis.</title>
        <authorList>
            <person name="Caldwell R.B."/>
            <person name="Kierzek A.M."/>
            <person name="Arakawa H."/>
            <person name="Bezzubov Y."/>
            <person name="Zaim J."/>
            <person name="Fiedler P."/>
            <person name="Kutter S."/>
            <person name="Blagodatski A."/>
            <person name="Kostovska D."/>
            <person name="Koter M."/>
            <person name="Plachy J."/>
            <person name="Carninci P."/>
            <person name="Hayashizaki Y."/>
            <person name="Buerstedde J.-M."/>
        </authorList>
    </citation>
    <scope>NUCLEOTIDE SEQUENCE [LARGE SCALE MRNA]</scope>
    <source>
        <strain>CB</strain>
        <tissue>Bursa of Fabricius</tissue>
    </source>
</reference>
<dbReference type="EC" id="3.6.4.13" evidence="2"/>
<dbReference type="EMBL" id="AJ720910">
    <property type="protein sequence ID" value="CAG32569.1"/>
    <property type="molecule type" value="mRNA"/>
</dbReference>
<dbReference type="RefSeq" id="NP_001012869.1">
    <property type="nucleotide sequence ID" value="NM_001012851.1"/>
</dbReference>
<dbReference type="SMR" id="Q5ZI74"/>
<dbReference type="FunCoup" id="Q5ZI74">
    <property type="interactions" value="924"/>
</dbReference>
<dbReference type="STRING" id="9031.ENSGALP00000065136"/>
<dbReference type="PaxDb" id="9031-ENSGALP00000008031"/>
<dbReference type="GeneID" id="420376"/>
<dbReference type="KEGG" id="gga:420376"/>
<dbReference type="CTD" id="22907"/>
<dbReference type="VEuPathDB" id="HostDB:geneid_420376"/>
<dbReference type="eggNOG" id="KOG0920">
    <property type="taxonomic scope" value="Eukaryota"/>
</dbReference>
<dbReference type="InParanoid" id="Q5ZI74"/>
<dbReference type="OrthoDB" id="3363059at2759"/>
<dbReference type="PhylomeDB" id="Q5ZI74"/>
<dbReference type="PRO" id="PR:Q5ZI74"/>
<dbReference type="Proteomes" id="UP000000539">
    <property type="component" value="Unassembled WGS sequence"/>
</dbReference>
<dbReference type="GO" id="GO:0005737">
    <property type="term" value="C:cytoplasm"/>
    <property type="evidence" value="ECO:0000250"/>
    <property type="project" value="UniProtKB"/>
</dbReference>
<dbReference type="GO" id="GO:0042645">
    <property type="term" value="C:mitochondrial nucleoid"/>
    <property type="evidence" value="ECO:0000250"/>
    <property type="project" value="UniProtKB"/>
</dbReference>
<dbReference type="GO" id="GO:0005739">
    <property type="term" value="C:mitochondrion"/>
    <property type="evidence" value="ECO:0000250"/>
    <property type="project" value="UniProtKB"/>
</dbReference>
<dbReference type="GO" id="GO:0005634">
    <property type="term" value="C:nucleus"/>
    <property type="evidence" value="ECO:0000318"/>
    <property type="project" value="GO_Central"/>
</dbReference>
<dbReference type="GO" id="GO:0005524">
    <property type="term" value="F:ATP binding"/>
    <property type="evidence" value="ECO:0007669"/>
    <property type="project" value="UniProtKB-KW"/>
</dbReference>
<dbReference type="GO" id="GO:0016887">
    <property type="term" value="F:ATP hydrolysis activity"/>
    <property type="evidence" value="ECO:0007669"/>
    <property type="project" value="RHEA"/>
</dbReference>
<dbReference type="GO" id="GO:0003682">
    <property type="term" value="F:chromatin binding"/>
    <property type="evidence" value="ECO:0000250"/>
    <property type="project" value="UniProtKB"/>
</dbReference>
<dbReference type="GO" id="GO:0003678">
    <property type="term" value="F:DNA helicase activity"/>
    <property type="evidence" value="ECO:0000318"/>
    <property type="project" value="GO_Central"/>
</dbReference>
<dbReference type="GO" id="GO:0002151">
    <property type="term" value="F:G-quadruplex RNA binding"/>
    <property type="evidence" value="ECO:0000318"/>
    <property type="project" value="GO_Central"/>
</dbReference>
<dbReference type="GO" id="GO:0003723">
    <property type="term" value="F:RNA binding"/>
    <property type="evidence" value="ECO:0000250"/>
    <property type="project" value="UniProtKB"/>
</dbReference>
<dbReference type="GO" id="GO:0003724">
    <property type="term" value="F:RNA helicase activity"/>
    <property type="evidence" value="ECO:0000250"/>
    <property type="project" value="UniProtKB"/>
</dbReference>
<dbReference type="GO" id="GO:0007417">
    <property type="term" value="P:central nervous system development"/>
    <property type="evidence" value="ECO:0000250"/>
    <property type="project" value="UniProtKB"/>
</dbReference>
<dbReference type="GO" id="GO:0042254">
    <property type="term" value="P:ribosome biogenesis"/>
    <property type="evidence" value="ECO:0007669"/>
    <property type="project" value="UniProtKB-KW"/>
</dbReference>
<dbReference type="CDD" id="cd17976">
    <property type="entry name" value="DEXHc_DHX30"/>
    <property type="match status" value="1"/>
</dbReference>
<dbReference type="CDD" id="cd18791">
    <property type="entry name" value="SF2_C_RHA"/>
    <property type="match status" value="1"/>
</dbReference>
<dbReference type="FunFam" id="1.20.120.1080:FF:000004">
    <property type="entry name" value="ATP-dependent RNA helicase DHX30 isoform X1"/>
    <property type="match status" value="1"/>
</dbReference>
<dbReference type="FunFam" id="3.30.160.20:FF:000016">
    <property type="entry name" value="ATP-dependent RNA helicase DHX30 isoform X1"/>
    <property type="match status" value="1"/>
</dbReference>
<dbReference type="FunFam" id="3.30.160.20:FF:000017">
    <property type="entry name" value="ATP-dependent RNA helicase DHX30 isoform X1"/>
    <property type="match status" value="1"/>
</dbReference>
<dbReference type="FunFam" id="3.40.50.300:FF:000414">
    <property type="entry name" value="ATP-dependent RNA helicase DHX30 isoform X1"/>
    <property type="match status" value="1"/>
</dbReference>
<dbReference type="FunFam" id="3.40.50.300:FF:000375">
    <property type="entry name" value="Putative ATP-dependent RNA helicase DHX30"/>
    <property type="match status" value="1"/>
</dbReference>
<dbReference type="Gene3D" id="1.20.120.1080">
    <property type="match status" value="1"/>
</dbReference>
<dbReference type="Gene3D" id="3.30.160.20">
    <property type="match status" value="2"/>
</dbReference>
<dbReference type="Gene3D" id="3.40.50.300">
    <property type="entry name" value="P-loop containing nucleotide triphosphate hydrolases"/>
    <property type="match status" value="2"/>
</dbReference>
<dbReference type="InterPro" id="IPR011709">
    <property type="entry name" value="DEAD-box_helicase_OB_fold"/>
</dbReference>
<dbReference type="InterPro" id="IPR011545">
    <property type="entry name" value="DEAD/DEAH_box_helicase_dom"/>
</dbReference>
<dbReference type="InterPro" id="IPR002464">
    <property type="entry name" value="DNA/RNA_helicase_DEAH_CS"/>
</dbReference>
<dbReference type="InterPro" id="IPR014720">
    <property type="entry name" value="dsRBD_dom"/>
</dbReference>
<dbReference type="InterPro" id="IPR056755">
    <property type="entry name" value="DSRM_2"/>
</dbReference>
<dbReference type="InterPro" id="IPR007502">
    <property type="entry name" value="Helicase-assoc_dom"/>
</dbReference>
<dbReference type="InterPro" id="IPR014001">
    <property type="entry name" value="Helicase_ATP-bd"/>
</dbReference>
<dbReference type="InterPro" id="IPR001650">
    <property type="entry name" value="Helicase_C-like"/>
</dbReference>
<dbReference type="InterPro" id="IPR027417">
    <property type="entry name" value="P-loop_NTPase"/>
</dbReference>
<dbReference type="PANTHER" id="PTHR18934">
    <property type="entry name" value="ATP-DEPENDENT RNA HELICASE"/>
    <property type="match status" value="1"/>
</dbReference>
<dbReference type="PANTHER" id="PTHR18934:SF257">
    <property type="entry name" value="ATP-DEPENDENT RNA HELICASE DHX30"/>
    <property type="match status" value="1"/>
</dbReference>
<dbReference type="Pfam" id="PF00270">
    <property type="entry name" value="DEAD"/>
    <property type="match status" value="1"/>
</dbReference>
<dbReference type="Pfam" id="PF00035">
    <property type="entry name" value="dsrm"/>
    <property type="match status" value="1"/>
</dbReference>
<dbReference type="Pfam" id="PF24995">
    <property type="entry name" value="DSRM_2"/>
    <property type="match status" value="1"/>
</dbReference>
<dbReference type="Pfam" id="PF21010">
    <property type="entry name" value="HA2_C"/>
    <property type="match status" value="1"/>
</dbReference>
<dbReference type="Pfam" id="PF00271">
    <property type="entry name" value="Helicase_C"/>
    <property type="match status" value="1"/>
</dbReference>
<dbReference type="Pfam" id="PF07717">
    <property type="entry name" value="OB_NTP_bind"/>
    <property type="match status" value="1"/>
</dbReference>
<dbReference type="SMART" id="SM00487">
    <property type="entry name" value="DEXDc"/>
    <property type="match status" value="1"/>
</dbReference>
<dbReference type="SMART" id="SM00847">
    <property type="entry name" value="HA2"/>
    <property type="match status" value="1"/>
</dbReference>
<dbReference type="SMART" id="SM00490">
    <property type="entry name" value="HELICc"/>
    <property type="match status" value="1"/>
</dbReference>
<dbReference type="SUPFAM" id="SSF52540">
    <property type="entry name" value="P-loop containing nucleoside triphosphate hydrolases"/>
    <property type="match status" value="1"/>
</dbReference>
<dbReference type="PROSITE" id="PS00690">
    <property type="entry name" value="DEAH_ATP_HELICASE"/>
    <property type="match status" value="1"/>
</dbReference>
<dbReference type="PROSITE" id="PS51192">
    <property type="entry name" value="HELICASE_ATP_BIND_1"/>
    <property type="match status" value="1"/>
</dbReference>
<dbReference type="PROSITE" id="PS51194">
    <property type="entry name" value="HELICASE_CTER"/>
    <property type="match status" value="1"/>
</dbReference>